<accession>P22079</accession>
<accession>A5JUY4</accession>
<accession>E7EMJ3</accession>
<accession>Q13408</accession>
<accession>Q3KNQ2</accession>
<comment type="function">
    <text evidence="2 3 7">Heme-containing oxidoreductase which catalyzes the conversion of thiocyanate (SCN(-)) into antimicrobial agent hypothiocyanous acid (OSCN(-)) in the presence of hydrogen peroxide (H2O2) (By similarity). Also involved in the conversion of iodide (I(-)) into hypoiodite (IO(-)) in the presence of H2O2 (By similarity). Responsible for the inactivation of a wide range of micro-organisms and hence, important component of defense mechanism (PubMed:12626341). Shows antibacterial properties against Pseudomonas aeruginosa (PubMed:12626341). The lactoperoxidase-SCN(-)-H2O2 system shows antibacterial properties against Burkholderia cepacia and Haemophilus influenzae in vitro (PubMed:12626341). Present in mammary and salivary gland secretions and may contribute to airway host defense against infection (PubMed:12626341). May contribute to maintaining an appropriate H2O2 cellular level, therefore protecting cells from H2O2-caused injuries and inflammation (By similarity).</text>
</comment>
<comment type="catalytic activity">
    <reaction evidence="17">
        <text>2 a phenolic donor + H2O2 = 2 a phenolic radical donor + 2 H2O</text>
        <dbReference type="Rhea" id="RHEA:56136"/>
        <dbReference type="ChEBI" id="CHEBI:15377"/>
        <dbReference type="ChEBI" id="CHEBI:16240"/>
        <dbReference type="ChEBI" id="CHEBI:139520"/>
        <dbReference type="ChEBI" id="CHEBI:139521"/>
        <dbReference type="EC" id="1.11.1.7"/>
    </reaction>
    <physiologicalReaction direction="left-to-right" evidence="17">
        <dbReference type="Rhea" id="RHEA:56137"/>
    </physiologicalReaction>
</comment>
<comment type="catalytic activity">
    <reaction evidence="2">
        <text>thiocyanate + H2O2 + H(+) = hypothiocyanous acid + H2O</text>
        <dbReference type="Rhea" id="RHEA:69416"/>
        <dbReference type="ChEBI" id="CHEBI:15377"/>
        <dbReference type="ChEBI" id="CHEBI:15378"/>
        <dbReference type="ChEBI" id="CHEBI:16240"/>
        <dbReference type="ChEBI" id="CHEBI:18022"/>
        <dbReference type="ChEBI" id="CHEBI:133907"/>
    </reaction>
    <physiologicalReaction direction="left-to-right" evidence="2">
        <dbReference type="Rhea" id="RHEA:69417"/>
    </physiologicalReaction>
</comment>
<comment type="catalytic activity">
    <reaction evidence="2">
        <text>iodide + H2O2 = hypoiodite + H2O</text>
        <dbReference type="Rhea" id="RHEA:69420"/>
        <dbReference type="ChEBI" id="CHEBI:15377"/>
        <dbReference type="ChEBI" id="CHEBI:16240"/>
        <dbReference type="ChEBI" id="CHEBI:16382"/>
        <dbReference type="ChEBI" id="CHEBI:29232"/>
    </reaction>
    <physiologicalReaction direction="left-to-right" evidence="2">
        <dbReference type="Rhea" id="RHEA:69421"/>
    </physiologicalReaction>
</comment>
<comment type="cofactor">
    <cofactor evidence="5">
        <name>Ca(2+)</name>
        <dbReference type="ChEBI" id="CHEBI:29108"/>
    </cofactor>
    <text evidence="5">Binds 1 Ca(2+) ion per heterodimer.</text>
</comment>
<comment type="cofactor">
    <cofactor evidence="5">
        <name>heme b</name>
        <dbReference type="ChEBI" id="CHEBI:60344"/>
    </cofactor>
    <text evidence="5">Binds 1 heme b (iron(II)-protoporphyrin IX) group covalently per heterodimer.</text>
</comment>
<comment type="subcellular location">
    <subcellularLocation>
        <location evidence="7">Secreted</location>
    </subcellularLocation>
    <subcellularLocation>
        <location evidence="3">Cytoplasm</location>
    </subcellularLocation>
</comment>
<comment type="alternative products">
    <event type="alternative splicing"/>
    <isoform>
        <id>P22079-1</id>
        <name>1</name>
        <sequence type="displayed"/>
    </isoform>
    <isoform>
        <id>P22079-2</id>
        <name>2</name>
        <name>V3</name>
        <sequence type="described" ref="VSP_044473"/>
    </isoform>
    <text>Additional isoforms seem to exist.</text>
</comment>
<comment type="tissue specificity">
    <text evidence="6 7">Mammary gland, milk and salivary gland. Found in bronchial submucosal glands.</text>
</comment>
<comment type="miscellaneous">
    <text evidence="2">Thiocyanate (SCN(-)) and hypothiocyanite (OSCN(-)) are bound in the distal heme cavity. The iodide ion (I(-)) occupies a position which is stabilized by the interactions with heme moiety, His-226, Arg-372 and Glu-375. Hydrogen peroxide is held between the heme iron and His-226.</text>
</comment>
<comment type="similarity">
    <text evidence="5">Belongs to the peroxidase family. XPO subfamily.</text>
</comment>
<organism>
    <name type="scientific">Homo sapiens</name>
    <name type="common">Human</name>
    <dbReference type="NCBI Taxonomy" id="9606"/>
    <lineage>
        <taxon>Eukaryota</taxon>
        <taxon>Metazoa</taxon>
        <taxon>Chordata</taxon>
        <taxon>Craniata</taxon>
        <taxon>Vertebrata</taxon>
        <taxon>Euteleostomi</taxon>
        <taxon>Mammalia</taxon>
        <taxon>Eutheria</taxon>
        <taxon>Euarchontoglires</taxon>
        <taxon>Primates</taxon>
        <taxon>Haplorrhini</taxon>
        <taxon>Catarrhini</taxon>
        <taxon>Hominidae</taxon>
        <taxon>Homo</taxon>
    </lineage>
</organism>
<protein>
    <recommendedName>
        <fullName evidence="13">Lactoperoxidase</fullName>
        <shortName evidence="13">LPO</shortName>
        <ecNumber evidence="17">1.11.1.7</ecNumber>
    </recommendedName>
    <alternativeName>
        <fullName evidence="14">Salivary peroxidase</fullName>
        <shortName evidence="14">SPO</shortName>
    </alternativeName>
</protein>
<dbReference type="EC" id="1.11.1.7" evidence="17"/>
<dbReference type="EMBL" id="U39573">
    <property type="protein sequence ID" value="AAC50717.1"/>
    <property type="molecule type" value="mRNA"/>
</dbReference>
<dbReference type="EMBL" id="EF579964">
    <property type="protein sequence ID" value="ABQ53140.1"/>
    <property type="molecule type" value="mRNA"/>
</dbReference>
<dbReference type="EMBL" id="AY324876">
    <property type="protein sequence ID" value="AAP72968.1"/>
    <property type="molecule type" value="Genomic_DNA"/>
</dbReference>
<dbReference type="EMBL" id="AC004687">
    <property type="status" value="NOT_ANNOTATED_CDS"/>
    <property type="molecule type" value="Genomic_DNA"/>
</dbReference>
<dbReference type="EMBL" id="AC005962">
    <property type="status" value="NOT_ANNOTATED_CDS"/>
    <property type="molecule type" value="Genomic_DNA"/>
</dbReference>
<dbReference type="EMBL" id="BC107166">
    <property type="protein sequence ID" value="AAI07167.1"/>
    <property type="molecule type" value="mRNA"/>
</dbReference>
<dbReference type="EMBL" id="BC107167">
    <property type="protein sequence ID" value="AAI07168.1"/>
    <property type="molecule type" value="mRNA"/>
</dbReference>
<dbReference type="EMBL" id="M58151">
    <property type="protein sequence ID" value="AAA63213.1"/>
    <property type="molecule type" value="mRNA"/>
</dbReference>
<dbReference type="CCDS" id="CCDS32689.1">
    <molecule id="P22079-1"/>
</dbReference>
<dbReference type="CCDS" id="CCDS54149.1">
    <molecule id="P22079-2"/>
</dbReference>
<dbReference type="PIR" id="JC4935">
    <property type="entry name" value="JC4935"/>
</dbReference>
<dbReference type="RefSeq" id="NP_001153574.1">
    <molecule id="P22079-2"/>
    <property type="nucleotide sequence ID" value="NM_001160102.2"/>
</dbReference>
<dbReference type="RefSeq" id="NP_006142.1">
    <molecule id="P22079-1"/>
    <property type="nucleotide sequence ID" value="NM_006151.3"/>
</dbReference>
<dbReference type="RefSeq" id="XP_054172083.1">
    <molecule id="P22079-1"/>
    <property type="nucleotide sequence ID" value="XM_054316108.1"/>
</dbReference>
<dbReference type="SMR" id="P22079"/>
<dbReference type="BioGRID" id="110207">
    <property type="interactions" value="11"/>
</dbReference>
<dbReference type="FunCoup" id="P22079">
    <property type="interactions" value="54"/>
</dbReference>
<dbReference type="IntAct" id="P22079">
    <property type="interactions" value="2"/>
</dbReference>
<dbReference type="STRING" id="9606.ENSP00000262290"/>
<dbReference type="BindingDB" id="P22079"/>
<dbReference type="ChEMBL" id="CHEMBL5898"/>
<dbReference type="DrugCentral" id="P22079"/>
<dbReference type="PeroxiBase" id="3316">
    <property type="entry name" value="HsLPO"/>
</dbReference>
<dbReference type="GlyConnect" id="2939">
    <property type="glycosylation" value="2 N-Linked glycans (1 site)"/>
</dbReference>
<dbReference type="GlyCosmos" id="P22079">
    <property type="glycosylation" value="4 sites, 4 glycans"/>
</dbReference>
<dbReference type="GlyGen" id="P22079">
    <property type="glycosylation" value="6 sites, 5 N-linked glycans (2 sites), 1 O-linked glycan (1 site)"/>
</dbReference>
<dbReference type="iPTMnet" id="P22079"/>
<dbReference type="PhosphoSitePlus" id="P22079"/>
<dbReference type="BioMuta" id="LPO"/>
<dbReference type="DMDM" id="12643419"/>
<dbReference type="jPOST" id="P22079"/>
<dbReference type="MassIVE" id="P22079"/>
<dbReference type="PaxDb" id="9606-ENSP00000262290"/>
<dbReference type="PeptideAtlas" id="P22079"/>
<dbReference type="PRIDE" id="P22079"/>
<dbReference type="ProteomicsDB" id="16955"/>
<dbReference type="ProteomicsDB" id="53957">
    <molecule id="P22079-1"/>
</dbReference>
<dbReference type="Antibodypedia" id="18358">
    <property type="antibodies" value="269 antibodies from 31 providers"/>
</dbReference>
<dbReference type="DNASU" id="4025"/>
<dbReference type="Ensembl" id="ENST00000262290.9">
    <molecule id="P22079-1"/>
    <property type="protein sequence ID" value="ENSP00000262290.4"/>
    <property type="gene ID" value="ENSG00000167419.11"/>
</dbReference>
<dbReference type="Ensembl" id="ENST00000421678.6">
    <molecule id="P22079-2"/>
    <property type="protein sequence ID" value="ENSP00000400245.2"/>
    <property type="gene ID" value="ENSG00000167419.11"/>
</dbReference>
<dbReference type="Ensembl" id="ENST00000582328.5">
    <molecule id="P22079-2"/>
    <property type="protein sequence ID" value="ENSP00000464636.1"/>
    <property type="gene ID" value="ENSG00000167419.11"/>
</dbReference>
<dbReference type="GeneID" id="4025"/>
<dbReference type="KEGG" id="hsa:4025"/>
<dbReference type="MANE-Select" id="ENST00000262290.9">
    <property type="protein sequence ID" value="ENSP00000262290.4"/>
    <property type="RefSeq nucleotide sequence ID" value="NM_006151.3"/>
    <property type="RefSeq protein sequence ID" value="NP_006142.1"/>
</dbReference>
<dbReference type="UCSC" id="uc002ivt.3">
    <molecule id="P22079-1"/>
    <property type="organism name" value="human"/>
</dbReference>
<dbReference type="AGR" id="HGNC:6678"/>
<dbReference type="CTD" id="4025"/>
<dbReference type="DisGeNET" id="4025"/>
<dbReference type="GeneCards" id="LPO"/>
<dbReference type="HGNC" id="HGNC:6678">
    <property type="gene designation" value="LPO"/>
</dbReference>
<dbReference type="HPA" id="ENSG00000167419">
    <property type="expression patterns" value="Tissue enriched (salivary)"/>
</dbReference>
<dbReference type="MalaCards" id="LPO"/>
<dbReference type="MIM" id="150205">
    <property type="type" value="gene"/>
</dbReference>
<dbReference type="MIM" id="170990">
    <property type="type" value="gene"/>
</dbReference>
<dbReference type="neXtProt" id="NX_P22079"/>
<dbReference type="OpenTargets" id="ENSG00000167419"/>
<dbReference type="PharmGKB" id="PA30439"/>
<dbReference type="VEuPathDB" id="HostDB:ENSG00000167419"/>
<dbReference type="eggNOG" id="KOG2408">
    <property type="taxonomic scope" value="Eukaryota"/>
</dbReference>
<dbReference type="GeneTree" id="ENSGT00940000160488"/>
<dbReference type="HOGENOM" id="CLU_006087_1_0_1"/>
<dbReference type="InParanoid" id="P22079"/>
<dbReference type="OMA" id="QNKMMTR"/>
<dbReference type="OrthoDB" id="823504at2759"/>
<dbReference type="PAN-GO" id="P22079">
    <property type="GO annotations" value="3 GO annotations based on evolutionary models"/>
</dbReference>
<dbReference type="PhylomeDB" id="P22079"/>
<dbReference type="TreeFam" id="TF314316"/>
<dbReference type="PathwayCommons" id="P22079"/>
<dbReference type="Reactome" id="R-HSA-8941413">
    <property type="pathway name" value="Events associated with phagocytolytic activity of PMN cells"/>
</dbReference>
<dbReference type="SignaLink" id="P22079"/>
<dbReference type="BioGRID-ORCS" id="4025">
    <property type="hits" value="42 hits in 1147 CRISPR screens"/>
</dbReference>
<dbReference type="ChiTaRS" id="LPO">
    <property type="organism name" value="human"/>
</dbReference>
<dbReference type="GeneWiki" id="Lactoperoxidase"/>
<dbReference type="GenomeRNAi" id="4025"/>
<dbReference type="Pharos" id="P22079">
    <property type="development level" value="Tbio"/>
</dbReference>
<dbReference type="PRO" id="PR:P22079"/>
<dbReference type="Proteomes" id="UP000005640">
    <property type="component" value="Chromosome 17"/>
</dbReference>
<dbReference type="RNAct" id="P22079">
    <property type="molecule type" value="protein"/>
</dbReference>
<dbReference type="Bgee" id="ENSG00000167419">
    <property type="expression patterns" value="Expressed in parotid gland and 80 other cell types or tissues"/>
</dbReference>
<dbReference type="ExpressionAtlas" id="P22079">
    <property type="expression patterns" value="baseline and differential"/>
</dbReference>
<dbReference type="GO" id="GO:0016323">
    <property type="term" value="C:basolateral plasma membrane"/>
    <property type="evidence" value="ECO:0000314"/>
    <property type="project" value="UniProtKB"/>
</dbReference>
<dbReference type="GO" id="GO:0005737">
    <property type="term" value="C:cytoplasm"/>
    <property type="evidence" value="ECO:0007669"/>
    <property type="project" value="UniProtKB-SubCell"/>
</dbReference>
<dbReference type="GO" id="GO:0070062">
    <property type="term" value="C:extracellular exosome"/>
    <property type="evidence" value="ECO:0007005"/>
    <property type="project" value="UniProtKB"/>
</dbReference>
<dbReference type="GO" id="GO:0005576">
    <property type="term" value="C:extracellular region"/>
    <property type="evidence" value="ECO:0000304"/>
    <property type="project" value="Reactome"/>
</dbReference>
<dbReference type="GO" id="GO:0005615">
    <property type="term" value="C:extracellular space"/>
    <property type="evidence" value="ECO:0000314"/>
    <property type="project" value="UniProtKB"/>
</dbReference>
<dbReference type="GO" id="GO:0020037">
    <property type="term" value="F:heme binding"/>
    <property type="evidence" value="ECO:0007669"/>
    <property type="project" value="InterPro"/>
</dbReference>
<dbReference type="GO" id="GO:0140825">
    <property type="term" value="F:lactoperoxidase activity"/>
    <property type="evidence" value="ECO:0007669"/>
    <property type="project" value="UniProtKB-EC"/>
</dbReference>
<dbReference type="GO" id="GO:0046872">
    <property type="term" value="F:metal ion binding"/>
    <property type="evidence" value="ECO:0007669"/>
    <property type="project" value="UniProtKB-KW"/>
</dbReference>
<dbReference type="GO" id="GO:0036393">
    <property type="term" value="F:thiocyanate peroxidase activity"/>
    <property type="evidence" value="ECO:0000314"/>
    <property type="project" value="UniProtKB"/>
</dbReference>
<dbReference type="GO" id="GO:0042742">
    <property type="term" value="P:defense response to bacterium"/>
    <property type="evidence" value="ECO:0000314"/>
    <property type="project" value="UniProtKB"/>
</dbReference>
<dbReference type="GO" id="GO:0001580">
    <property type="term" value="P:detection of chemical stimulus involved in sensory perception of bitter taste"/>
    <property type="evidence" value="ECO:0000314"/>
    <property type="project" value="UniProtKB"/>
</dbReference>
<dbReference type="GO" id="GO:0042744">
    <property type="term" value="P:hydrogen peroxide catabolic process"/>
    <property type="evidence" value="ECO:0007669"/>
    <property type="project" value="UniProtKB-KW"/>
</dbReference>
<dbReference type="GO" id="GO:0006979">
    <property type="term" value="P:response to oxidative stress"/>
    <property type="evidence" value="ECO:0000303"/>
    <property type="project" value="UniProtKB"/>
</dbReference>
<dbReference type="CDD" id="cd09824">
    <property type="entry name" value="myeloperoxidase_like"/>
    <property type="match status" value="1"/>
</dbReference>
<dbReference type="FunFam" id="1.10.640.10:FF:000001">
    <property type="entry name" value="Peroxidasin homolog"/>
    <property type="match status" value="1"/>
</dbReference>
<dbReference type="Gene3D" id="1.10.640.10">
    <property type="entry name" value="Haem peroxidase domain superfamily, animal type"/>
    <property type="match status" value="1"/>
</dbReference>
<dbReference type="InterPro" id="IPR019791">
    <property type="entry name" value="Haem_peroxidase_animal"/>
</dbReference>
<dbReference type="InterPro" id="IPR010255">
    <property type="entry name" value="Haem_peroxidase_sf"/>
</dbReference>
<dbReference type="InterPro" id="IPR037120">
    <property type="entry name" value="Haem_peroxidase_sf_animal"/>
</dbReference>
<dbReference type="PANTHER" id="PTHR11475:SF67">
    <property type="entry name" value="LACTOPEROXIDASE"/>
    <property type="match status" value="1"/>
</dbReference>
<dbReference type="PANTHER" id="PTHR11475">
    <property type="entry name" value="OXIDASE/PEROXIDASE"/>
    <property type="match status" value="1"/>
</dbReference>
<dbReference type="Pfam" id="PF03098">
    <property type="entry name" value="An_peroxidase"/>
    <property type="match status" value="1"/>
</dbReference>
<dbReference type="PRINTS" id="PR00457">
    <property type="entry name" value="ANPEROXIDASE"/>
</dbReference>
<dbReference type="SUPFAM" id="SSF48113">
    <property type="entry name" value="Heme-dependent peroxidases"/>
    <property type="match status" value="1"/>
</dbReference>
<dbReference type="PROSITE" id="PS50292">
    <property type="entry name" value="PEROXIDASE_3"/>
    <property type="match status" value="1"/>
</dbReference>
<name>PERL_HUMAN</name>
<keyword id="KW-0025">Alternative splicing</keyword>
<keyword id="KW-0929">Antimicrobial</keyword>
<keyword id="KW-0106">Calcium</keyword>
<keyword id="KW-0963">Cytoplasm</keyword>
<keyword id="KW-0903">Direct protein sequencing</keyword>
<keyword id="KW-1015">Disulfide bond</keyword>
<keyword id="KW-0325">Glycoprotein</keyword>
<keyword id="KW-0349">Heme</keyword>
<keyword id="KW-0376">Hydrogen peroxide</keyword>
<keyword id="KW-0408">Iron</keyword>
<keyword id="KW-0479">Metal-binding</keyword>
<keyword id="KW-0944">Nitration</keyword>
<keyword id="KW-0560">Oxidoreductase</keyword>
<keyword id="KW-0575">Peroxidase</keyword>
<keyword id="KW-0597">Phosphoprotein</keyword>
<keyword id="KW-1267">Proteomics identification</keyword>
<keyword id="KW-1185">Reference proteome</keyword>
<keyword id="KW-0964">Secreted</keyword>
<keyword id="KW-0732">Signal</keyword>
<reference key="1">
    <citation type="journal article" date="1996" name="Gene">
        <title>Cloning and sequence analysis of the human salivary peroxidase-encoding cDNA.</title>
        <authorList>
            <person name="Kiser C."/>
            <person name="Caterina J."/>
            <person name="Engler J.A."/>
            <person name="Rahemtulla B."/>
            <person name="Rahemtulla F."/>
        </authorList>
    </citation>
    <scope>NUCLEOTIDE SEQUENCE [MRNA] (ISOFORM 1)</scope>
    <source>
        <tissue>Submandibular gland</tissue>
    </source>
</reference>
<reference key="2">
    <citation type="journal article" date="2009" name="Arch. Biochem. Biophys.">
        <title>Molecular heterogeneity and alternative splicing of human lactoperoxidase.</title>
        <authorList>
            <person name="Fragoso M.A."/>
            <person name="Torbati A."/>
            <person name="Fregien N."/>
            <person name="Conner G.E."/>
        </authorList>
    </citation>
    <scope>NUCLEOTIDE SEQUENCE [MRNA]</scope>
    <scope>VARIANT MET-421</scope>
    <scope>ALTERNATIVE SPLICING</scope>
</reference>
<reference key="3">
    <citation type="submission" date="2003-06" db="EMBL/GenBank/DDBJ databases">
        <authorList>
            <consortium name="NIEHS SNPs program"/>
        </authorList>
    </citation>
    <scope>NUCLEOTIDE SEQUENCE [GENOMIC DNA]</scope>
    <scope>VARIANTS ILE-105; THR-244; GLN-414; MET-421; GLN-514; THR-614 AND ASN-700</scope>
</reference>
<reference key="4">
    <citation type="journal article" date="2006" name="Nature">
        <title>DNA sequence of human chromosome 17 and analysis of rearrangement in the human lineage.</title>
        <authorList>
            <person name="Zody M.C."/>
            <person name="Garber M."/>
            <person name="Adams D.J."/>
            <person name="Sharpe T."/>
            <person name="Harrow J."/>
            <person name="Lupski J.R."/>
            <person name="Nicholson C."/>
            <person name="Searle S.M."/>
            <person name="Wilming L."/>
            <person name="Young S.K."/>
            <person name="Abouelleil A."/>
            <person name="Allen N.R."/>
            <person name="Bi W."/>
            <person name="Bloom T."/>
            <person name="Borowsky M.L."/>
            <person name="Bugalter B.E."/>
            <person name="Butler J."/>
            <person name="Chang J.L."/>
            <person name="Chen C.-K."/>
            <person name="Cook A."/>
            <person name="Corum B."/>
            <person name="Cuomo C.A."/>
            <person name="de Jong P.J."/>
            <person name="DeCaprio D."/>
            <person name="Dewar K."/>
            <person name="FitzGerald M."/>
            <person name="Gilbert J."/>
            <person name="Gibson R."/>
            <person name="Gnerre S."/>
            <person name="Goldstein S."/>
            <person name="Grafham D.V."/>
            <person name="Grocock R."/>
            <person name="Hafez N."/>
            <person name="Hagopian D.S."/>
            <person name="Hart E."/>
            <person name="Norman C.H."/>
            <person name="Humphray S."/>
            <person name="Jaffe D.B."/>
            <person name="Jones M."/>
            <person name="Kamal M."/>
            <person name="Khodiyar V.K."/>
            <person name="LaButti K."/>
            <person name="Laird G."/>
            <person name="Lehoczky J."/>
            <person name="Liu X."/>
            <person name="Lokyitsang T."/>
            <person name="Loveland J."/>
            <person name="Lui A."/>
            <person name="Macdonald P."/>
            <person name="Major J.E."/>
            <person name="Matthews L."/>
            <person name="Mauceli E."/>
            <person name="McCarroll S.A."/>
            <person name="Mihalev A.H."/>
            <person name="Mudge J."/>
            <person name="Nguyen C."/>
            <person name="Nicol R."/>
            <person name="O'Leary S.B."/>
            <person name="Osoegawa K."/>
            <person name="Schwartz D.C."/>
            <person name="Shaw-Smith C."/>
            <person name="Stankiewicz P."/>
            <person name="Steward C."/>
            <person name="Swarbreck D."/>
            <person name="Venkataraman V."/>
            <person name="Whittaker C.A."/>
            <person name="Yang X."/>
            <person name="Zimmer A.R."/>
            <person name="Bradley A."/>
            <person name="Hubbard T."/>
            <person name="Birren B.W."/>
            <person name="Rogers J."/>
            <person name="Lander E.S."/>
            <person name="Nusbaum C."/>
        </authorList>
    </citation>
    <scope>NUCLEOTIDE SEQUENCE [LARGE SCALE GENOMIC DNA]</scope>
</reference>
<reference key="5">
    <citation type="journal article" date="2004" name="Genome Res.">
        <title>The status, quality, and expansion of the NIH full-length cDNA project: the Mammalian Gene Collection (MGC).</title>
        <authorList>
            <consortium name="The MGC Project Team"/>
        </authorList>
    </citation>
    <scope>NUCLEOTIDE SEQUENCE [LARGE SCALE MRNA] (ISOFORM 1)</scope>
</reference>
<reference key="6">
    <citation type="journal article" date="1990" name="DNA Cell Biol.">
        <title>Molecular cloning of cDNAs encoding bovine and human lactoperoxidase.</title>
        <authorList>
            <person name="Dull T.J."/>
            <person name="Uyeda C."/>
            <person name="Strosberg A.D."/>
            <person name="Nedwin G."/>
            <person name="Seilhamer J.J."/>
        </authorList>
    </citation>
    <scope>NUCLEOTIDE SEQUENCE [MRNA] OF 389-712</scope>
    <scope>VARIANT MET-421</scope>
</reference>
<reference key="7">
    <citation type="journal article" date="2000" name="J. Nutr. Biochem.">
        <title>Identification of lactoperoxidase in mature human milk.</title>
        <authorList>
            <person name="Shin K."/>
            <person name="Tomita M."/>
            <person name="Loennerdal B."/>
        </authorList>
    </citation>
    <scope>PROTEIN SEQUENCE OF N-TERMINUS</scope>
    <scope>GLYCOSYLATION</scope>
    <scope>TISSUE SPECIFICITY</scope>
</reference>
<reference key="8">
    <citation type="journal article" date="2003" name="Am. J. Respir. Cell Mol. Biol.">
        <title>Lactoperoxidase and human airway host defense.</title>
        <authorList>
            <person name="Wijkstrom-Frei C."/>
            <person name="El-Chemaly S."/>
            <person name="Ali-Rachedi R."/>
            <person name="Gerson C."/>
            <person name="Cobas M.A."/>
            <person name="Forteza R."/>
            <person name="Salathe M."/>
            <person name="Conner G.E."/>
        </authorList>
    </citation>
    <scope>FUNCTION</scope>
    <scope>CATALYTIC ACTIVITY</scope>
    <scope>SUBCELLULAR LOCATION</scope>
    <scope>TISSUE SPECIFICITY</scope>
</reference>
<reference key="9">
    <citation type="journal article" date="2006" name="J. Proteome Res.">
        <title>Identification of N-linked glycoproteins in human saliva by glycoprotein capture and mass spectrometry.</title>
        <authorList>
            <person name="Ramachandran P."/>
            <person name="Boontheung P."/>
            <person name="Xie Y."/>
            <person name="Sondej M."/>
            <person name="Wong D.T."/>
            <person name="Loo J.A."/>
        </authorList>
    </citation>
    <scope>GLYCOSYLATION [LARGE SCALE ANALYSIS] AT ASN-212 AND ASN-358</scope>
    <source>
        <tissue>Saliva</tissue>
    </source>
</reference>
<reference key="10">
    <citation type="journal article" date="2008" name="Proteomics">
        <title>Identification of N-linked glycoproteins in human milk by hydrophilic interaction liquid chromatography and mass spectrometry.</title>
        <authorList>
            <person name="Picariello G."/>
            <person name="Ferranti P."/>
            <person name="Mamone G."/>
            <person name="Roepstorff P."/>
            <person name="Addeo F."/>
        </authorList>
    </citation>
    <scope>GLYCOSYLATION [LARGE SCALE ANALYSIS] AT ASN-358</scope>
    <source>
        <tissue>Milk</tissue>
    </source>
</reference>
<evidence type="ECO:0000250" key="1">
    <source>
        <dbReference type="UniProtKB" id="P11678"/>
    </source>
</evidence>
<evidence type="ECO:0000250" key="2">
    <source>
        <dbReference type="UniProtKB" id="P80025"/>
    </source>
</evidence>
<evidence type="ECO:0000250" key="3">
    <source>
        <dbReference type="UniProtKB" id="Q5SW46"/>
    </source>
</evidence>
<evidence type="ECO:0000255" key="4"/>
<evidence type="ECO:0000255" key="5">
    <source>
        <dbReference type="PROSITE-ProRule" id="PRU00298"/>
    </source>
</evidence>
<evidence type="ECO:0000269" key="6">
    <source>
    </source>
</evidence>
<evidence type="ECO:0000269" key="7">
    <source>
    </source>
</evidence>
<evidence type="ECO:0000269" key="8">
    <source>
    </source>
</evidence>
<evidence type="ECO:0000269" key="9">
    <source>
    </source>
</evidence>
<evidence type="ECO:0000269" key="10">
    <source>
    </source>
</evidence>
<evidence type="ECO:0000269" key="11">
    <source>
    </source>
</evidence>
<evidence type="ECO:0000269" key="12">
    <source ref="3"/>
</evidence>
<evidence type="ECO:0000303" key="13">
    <source>
    </source>
</evidence>
<evidence type="ECO:0000303" key="14">
    <source>
    </source>
</evidence>
<evidence type="ECO:0000305" key="15"/>
<evidence type="ECO:0000305" key="16">
    <source>
    </source>
</evidence>
<evidence type="ECO:0000305" key="17">
    <source>
    </source>
</evidence>
<evidence type="ECO:0000312" key="18">
    <source>
        <dbReference type="HGNC" id="HGNC:6678"/>
    </source>
</evidence>
<sequence length="712" mass="80288">MRVLLHLPALLASLILLQAAASTTRAQTTRTSAISDTVSQAKVQVNKAFLDSRTRLKTAMSSETPTSRQLSEYLKHAKGRTRTAIRNGQVWEESLKRLRQKASLTNVTDPSLDLTSLSLEVGCGAPAPVVRCDPCSPYRTITGDCNNRRKPALGAANRALARWLPAEYEDGLSLPFGWTPGKTRNGFPLPLAREVSNKIVGYLNEEGVLDQNRSLLFMQWGQIVDHDLDFAPDTELGSSEYSKAQCDEYCIQGDNCFPIMFPPNDPKAGTQGKCMPFFRAGFVCPTPPYKSLAREQINALTSFLDASFVYSSEPSLASRLRNLSSPLGLMAVNQEVSDHGLPYLPYDSKKPSPCEFINTTARVPCFLAGDSRASEHILLATSHTLFLREHNRLARELKRLNPQWDGEKLYQEARKILGAFVQIITFRDYLPILLGDHMQKWIPPYQGYSESVDPRISNVFTFAFRFGHLEVPSSMFRLDENYQPWGPEPELPLHTLFFNTWRMVKDGGIDPLVRGLLAKKSKLMKQNKMMTGELRNKLFQPTHRIHGFDLAAINTQRCRDHGQPGYNSWRAFCDLSQPQTLEELNTVLKSKMLAKKLLGLYGTPDNIDIWIGAIAEPLVERGRVGPLLACLLGKQFQQIRDGDRFWWENPGVFTNEQKDSLQKMSFSRLVCDNTRITKVPRDPFWANSYPYDFVDCSAIDKLDLSPWASVKN</sequence>
<proteinExistence type="evidence at protein level"/>
<gene>
    <name evidence="18" type="primary">LPO</name>
    <name type="synonym">SAPX</name>
</gene>
<feature type="signal peptide" evidence="4">
    <location>
        <begin position="1"/>
        <end position="26"/>
    </location>
</feature>
<feature type="propeptide" id="PRO_0000023649" evidence="16">
    <location>
        <begin position="27"/>
        <end position="80"/>
    </location>
</feature>
<feature type="chain" id="PRO_0000023650" description="Lactoperoxidase" evidence="16">
    <location>
        <begin position="81"/>
        <end position="712"/>
    </location>
</feature>
<feature type="active site" description="Proton acceptor" evidence="5">
    <location>
        <position position="226"/>
    </location>
</feature>
<feature type="binding site" description="covalent" evidence="2">
    <location>
        <position position="225"/>
    </location>
    <ligand>
        <name>heme b</name>
        <dbReference type="ChEBI" id="CHEBI:60344"/>
    </ligand>
</feature>
<feature type="binding site" evidence="5">
    <location>
        <position position="227"/>
    </location>
    <ligand>
        <name>Ca(2+)</name>
        <dbReference type="ChEBI" id="CHEBI:29108"/>
    </ligand>
</feature>
<feature type="binding site" evidence="5">
    <location>
        <position position="301"/>
    </location>
    <ligand>
        <name>Ca(2+)</name>
        <dbReference type="ChEBI" id="CHEBI:29108"/>
    </ligand>
</feature>
<feature type="binding site" evidence="5">
    <location>
        <position position="303"/>
    </location>
    <ligand>
        <name>Ca(2+)</name>
        <dbReference type="ChEBI" id="CHEBI:29108"/>
    </ligand>
</feature>
<feature type="binding site" evidence="5">
    <location>
        <position position="305"/>
    </location>
    <ligand>
        <name>Ca(2+)</name>
        <dbReference type="ChEBI" id="CHEBI:29108"/>
    </ligand>
</feature>
<feature type="binding site" evidence="5">
    <location>
        <position position="307"/>
    </location>
    <ligand>
        <name>Ca(2+)</name>
        <dbReference type="ChEBI" id="CHEBI:29108"/>
    </ligand>
</feature>
<feature type="binding site" description="covalent" evidence="2">
    <location>
        <position position="375"/>
    </location>
    <ligand>
        <name>heme b</name>
        <dbReference type="ChEBI" id="CHEBI:60344"/>
    </ligand>
</feature>
<feature type="binding site" description="axial binding residue" evidence="5">
    <location>
        <position position="468"/>
    </location>
    <ligand>
        <name>heme b</name>
        <dbReference type="ChEBI" id="CHEBI:60344"/>
    </ligand>
    <ligandPart>
        <name>Fe</name>
        <dbReference type="ChEBI" id="CHEBI:18248"/>
    </ligandPart>
</feature>
<feature type="site" description="Transition state stabilizer" evidence="5">
    <location>
        <position position="372"/>
    </location>
</feature>
<feature type="modified residue" description="Phosphoserine" evidence="2">
    <location>
        <position position="315"/>
    </location>
</feature>
<feature type="modified residue" description="3'-nitrotyrosine" evidence="1">
    <location>
        <position position="482"/>
    </location>
</feature>
<feature type="glycosylation site" description="N-linked (GlcNAc...) asparagine" evidence="4">
    <location>
        <position position="106"/>
    </location>
</feature>
<feature type="glycosylation site" description="N-linked (GlcNAc...) asparagine" evidence="8">
    <location>
        <position position="212"/>
    </location>
</feature>
<feature type="glycosylation site" description="N-linked (GlcNAc...) asparagine" evidence="4">
    <location>
        <position position="322"/>
    </location>
</feature>
<feature type="glycosylation site" description="N-linked (GlcNAc...) asparagine" evidence="8 9">
    <location>
        <position position="358"/>
    </location>
</feature>
<feature type="disulfide bond" evidence="5">
    <location>
        <begin position="132"/>
        <end position="145"/>
    </location>
</feature>
<feature type="disulfide bond" evidence="5">
    <location>
        <begin position="246"/>
        <end position="256"/>
    </location>
</feature>
<feature type="disulfide bond" evidence="5">
    <location>
        <begin position="250"/>
        <end position="274"/>
    </location>
</feature>
<feature type="disulfide bond" evidence="5">
    <location>
        <begin position="354"/>
        <end position="365"/>
    </location>
</feature>
<feature type="disulfide bond" evidence="5">
    <location>
        <begin position="573"/>
        <end position="630"/>
    </location>
</feature>
<feature type="disulfide bond" evidence="5">
    <location>
        <begin position="671"/>
        <end position="696"/>
    </location>
</feature>
<feature type="splice variant" id="VSP_044473" description="In isoform 2." evidence="15">
    <location>
        <begin position="26"/>
        <end position="108"/>
    </location>
</feature>
<feature type="sequence variant" id="VAR_018809" description="In dbSNP:rs8178318." evidence="12">
    <original>T</original>
    <variation>I</variation>
    <location>
        <position position="105"/>
    </location>
</feature>
<feature type="sequence variant" id="VAR_018810" description="In dbSNP:rs8178338." evidence="12">
    <original>A</original>
    <variation>T</variation>
    <location>
        <position position="244"/>
    </location>
</feature>
<feature type="sequence variant" id="VAR_018811" description="In dbSNP:rs8178355." evidence="12">
    <original>R</original>
    <variation>Q</variation>
    <location>
        <position position="414"/>
    </location>
</feature>
<feature type="sequence variant" id="VAR_018812" description="In dbSNP:rs2301870." evidence="10 11 12">
    <original>V</original>
    <variation>M</variation>
    <location>
        <position position="421"/>
    </location>
</feature>
<feature type="sequence variant" id="VAR_018813" description="In dbSNP:rs8178401." evidence="12">
    <original>R</original>
    <variation>Q</variation>
    <location>
        <position position="514"/>
    </location>
</feature>
<feature type="sequence variant" id="VAR_018814" description="In dbSNP:rs8178408." evidence="12">
    <original>I</original>
    <variation>T</variation>
    <location>
        <position position="614"/>
    </location>
</feature>
<feature type="sequence variant" id="VAR_018815" description="In dbSNP:rs8178412." evidence="12">
    <original>D</original>
    <variation>N</variation>
    <location>
        <position position="700"/>
    </location>
</feature>
<feature type="sequence conflict" description="In Ref. 2; ABQ53140." evidence="15" ref="2">
    <original>N</original>
    <variation>S</variation>
    <location>
        <position position="255"/>
    </location>
</feature>
<feature type="sequence conflict" description="In Ref. 2; ABQ53140." evidence="15" ref="2">
    <original>K</original>
    <variation>M</variation>
    <location>
        <position position="678"/>
    </location>
</feature>